<accession>B1LWY6</accession>
<keyword id="KW-0227">DNA damage</keyword>
<keyword id="KW-0234">DNA repair</keyword>
<keyword id="KW-0238">DNA-binding</keyword>
<keyword id="KW-0326">Glycosidase</keyword>
<keyword id="KW-0378">Hydrolase</keyword>
<keyword id="KW-0456">Lyase</keyword>
<keyword id="KW-0479">Metal-binding</keyword>
<keyword id="KW-0511">Multifunctional enzyme</keyword>
<keyword id="KW-0862">Zinc</keyword>
<keyword id="KW-0863">Zinc-finger</keyword>
<proteinExistence type="inferred from homology"/>
<gene>
    <name evidence="2" type="primary">mutM</name>
    <name evidence="2" type="synonym">fpg</name>
    <name type="ordered locus">Mrad2831_3716</name>
</gene>
<organism>
    <name type="scientific">Methylobacterium radiotolerans (strain ATCC 27329 / DSM 1819 / JCM 2831 / NBRC 15690 / NCIMB 10815 / 0-1)</name>
    <dbReference type="NCBI Taxonomy" id="426355"/>
    <lineage>
        <taxon>Bacteria</taxon>
        <taxon>Pseudomonadati</taxon>
        <taxon>Pseudomonadota</taxon>
        <taxon>Alphaproteobacteria</taxon>
        <taxon>Hyphomicrobiales</taxon>
        <taxon>Methylobacteriaceae</taxon>
        <taxon>Methylobacterium</taxon>
    </lineage>
</organism>
<protein>
    <recommendedName>
        <fullName evidence="2">Formamidopyrimidine-DNA glycosylase</fullName>
        <shortName evidence="2">Fapy-DNA glycosylase</shortName>
        <ecNumber evidence="2">3.2.2.23</ecNumber>
    </recommendedName>
    <alternativeName>
        <fullName evidence="2">DNA-(apurinic or apyrimidinic site) lyase MutM</fullName>
        <shortName evidence="2">AP lyase MutM</shortName>
        <ecNumber evidence="2">4.2.99.18</ecNumber>
    </alternativeName>
</protein>
<name>FPG_METRJ</name>
<evidence type="ECO:0000250" key="1"/>
<evidence type="ECO:0000255" key="2">
    <source>
        <dbReference type="HAMAP-Rule" id="MF_00103"/>
    </source>
</evidence>
<dbReference type="EC" id="3.2.2.23" evidence="2"/>
<dbReference type="EC" id="4.2.99.18" evidence="2"/>
<dbReference type="EMBL" id="CP001001">
    <property type="protein sequence ID" value="ACB25691.1"/>
    <property type="molecule type" value="Genomic_DNA"/>
</dbReference>
<dbReference type="RefSeq" id="WP_012320650.1">
    <property type="nucleotide sequence ID" value="NC_010505.1"/>
</dbReference>
<dbReference type="SMR" id="B1LWY6"/>
<dbReference type="STRING" id="426355.Mrad2831_3716"/>
<dbReference type="GeneID" id="6139769"/>
<dbReference type="KEGG" id="mrd:Mrad2831_3716"/>
<dbReference type="eggNOG" id="COG0266">
    <property type="taxonomic scope" value="Bacteria"/>
</dbReference>
<dbReference type="HOGENOM" id="CLU_038423_1_1_5"/>
<dbReference type="OrthoDB" id="9800855at2"/>
<dbReference type="Proteomes" id="UP000006589">
    <property type="component" value="Chromosome"/>
</dbReference>
<dbReference type="GO" id="GO:0034039">
    <property type="term" value="F:8-oxo-7,8-dihydroguanine DNA N-glycosylase activity"/>
    <property type="evidence" value="ECO:0007669"/>
    <property type="project" value="TreeGrafter"/>
</dbReference>
<dbReference type="GO" id="GO:0140078">
    <property type="term" value="F:class I DNA-(apurinic or apyrimidinic site) endonuclease activity"/>
    <property type="evidence" value="ECO:0007669"/>
    <property type="project" value="UniProtKB-EC"/>
</dbReference>
<dbReference type="GO" id="GO:0003684">
    <property type="term" value="F:damaged DNA binding"/>
    <property type="evidence" value="ECO:0007669"/>
    <property type="project" value="InterPro"/>
</dbReference>
<dbReference type="GO" id="GO:0008270">
    <property type="term" value="F:zinc ion binding"/>
    <property type="evidence" value="ECO:0007669"/>
    <property type="project" value="UniProtKB-UniRule"/>
</dbReference>
<dbReference type="GO" id="GO:0006284">
    <property type="term" value="P:base-excision repair"/>
    <property type="evidence" value="ECO:0007669"/>
    <property type="project" value="InterPro"/>
</dbReference>
<dbReference type="CDD" id="cd08966">
    <property type="entry name" value="EcFpg-like_N"/>
    <property type="match status" value="1"/>
</dbReference>
<dbReference type="FunFam" id="1.10.8.50:FF:000003">
    <property type="entry name" value="Formamidopyrimidine-DNA glycosylase"/>
    <property type="match status" value="1"/>
</dbReference>
<dbReference type="Gene3D" id="1.10.8.50">
    <property type="match status" value="1"/>
</dbReference>
<dbReference type="Gene3D" id="3.20.190.10">
    <property type="entry name" value="MutM-like, N-terminal"/>
    <property type="match status" value="1"/>
</dbReference>
<dbReference type="HAMAP" id="MF_00103">
    <property type="entry name" value="Fapy_DNA_glycosyl"/>
    <property type="match status" value="1"/>
</dbReference>
<dbReference type="InterPro" id="IPR015886">
    <property type="entry name" value="DNA_glyclase/AP_lyase_DNA-bd"/>
</dbReference>
<dbReference type="InterPro" id="IPR015887">
    <property type="entry name" value="DNA_glyclase_Znf_dom_DNA_BS"/>
</dbReference>
<dbReference type="InterPro" id="IPR020629">
    <property type="entry name" value="Formamido-pyr_DNA_Glyclase"/>
</dbReference>
<dbReference type="InterPro" id="IPR012319">
    <property type="entry name" value="FPG_cat"/>
</dbReference>
<dbReference type="InterPro" id="IPR035937">
    <property type="entry name" value="MutM-like_N-ter"/>
</dbReference>
<dbReference type="InterPro" id="IPR010979">
    <property type="entry name" value="Ribosomal_uS13-like_H2TH"/>
</dbReference>
<dbReference type="InterPro" id="IPR000214">
    <property type="entry name" value="Znf_DNA_glyclase/AP_lyase"/>
</dbReference>
<dbReference type="InterPro" id="IPR010663">
    <property type="entry name" value="Znf_FPG/IleRS"/>
</dbReference>
<dbReference type="NCBIfam" id="TIGR00577">
    <property type="entry name" value="fpg"/>
    <property type="match status" value="1"/>
</dbReference>
<dbReference type="NCBIfam" id="NF002211">
    <property type="entry name" value="PRK01103.1"/>
    <property type="match status" value="1"/>
</dbReference>
<dbReference type="PANTHER" id="PTHR22993">
    <property type="entry name" value="FORMAMIDOPYRIMIDINE-DNA GLYCOSYLASE"/>
    <property type="match status" value="1"/>
</dbReference>
<dbReference type="PANTHER" id="PTHR22993:SF9">
    <property type="entry name" value="FORMAMIDOPYRIMIDINE-DNA GLYCOSYLASE"/>
    <property type="match status" value="1"/>
</dbReference>
<dbReference type="Pfam" id="PF01149">
    <property type="entry name" value="Fapy_DNA_glyco"/>
    <property type="match status" value="1"/>
</dbReference>
<dbReference type="Pfam" id="PF06831">
    <property type="entry name" value="H2TH"/>
    <property type="match status" value="1"/>
</dbReference>
<dbReference type="Pfam" id="PF06827">
    <property type="entry name" value="zf-FPG_IleRS"/>
    <property type="match status" value="1"/>
</dbReference>
<dbReference type="SMART" id="SM00898">
    <property type="entry name" value="Fapy_DNA_glyco"/>
    <property type="match status" value="1"/>
</dbReference>
<dbReference type="SMART" id="SM01232">
    <property type="entry name" value="H2TH"/>
    <property type="match status" value="1"/>
</dbReference>
<dbReference type="SUPFAM" id="SSF57716">
    <property type="entry name" value="Glucocorticoid receptor-like (DNA-binding domain)"/>
    <property type="match status" value="1"/>
</dbReference>
<dbReference type="SUPFAM" id="SSF81624">
    <property type="entry name" value="N-terminal domain of MutM-like DNA repair proteins"/>
    <property type="match status" value="1"/>
</dbReference>
<dbReference type="SUPFAM" id="SSF46946">
    <property type="entry name" value="S13-like H2TH domain"/>
    <property type="match status" value="1"/>
</dbReference>
<dbReference type="PROSITE" id="PS51068">
    <property type="entry name" value="FPG_CAT"/>
    <property type="match status" value="1"/>
</dbReference>
<dbReference type="PROSITE" id="PS01242">
    <property type="entry name" value="ZF_FPG_1"/>
    <property type="match status" value="1"/>
</dbReference>
<dbReference type="PROSITE" id="PS51066">
    <property type="entry name" value="ZF_FPG_2"/>
    <property type="match status" value="1"/>
</dbReference>
<sequence length="296" mass="31755">MPELPEVETVRRGLAPALVGARFSRVTLRRANLRFPFPERFAARLEGRTVTGLARRAKYLTAALDSGETLVMHLGMSGRFDVALPDGSNLSPGDFYLEGAQGTPKHDHVVMAMSTGATVTYNDARRFGFMDLVPSAELAACRHFARMGVEPLDGLTGAVIARLFRHKIAPLKAALLDQRLIAGLGNIYVCEALHRARLHPEAPAGSLARPDGRPTPEANALAKAIVQVLEEAVKAGGSTLRDYAHTDGSAGAFQHAFRVYDRVGLPCSRPGCAGAITRIVQANRSTFFCATCQPPG</sequence>
<feature type="initiator methionine" description="Removed" evidence="1">
    <location>
        <position position="1"/>
    </location>
</feature>
<feature type="chain" id="PRO_1000094054" description="Formamidopyrimidine-DNA glycosylase">
    <location>
        <begin position="2"/>
        <end position="296"/>
    </location>
</feature>
<feature type="zinc finger region" description="FPG-type" evidence="2">
    <location>
        <begin position="258"/>
        <end position="294"/>
    </location>
</feature>
<feature type="active site" description="Schiff-base intermediate with DNA" evidence="2">
    <location>
        <position position="2"/>
    </location>
</feature>
<feature type="active site" description="Proton donor" evidence="2">
    <location>
        <position position="3"/>
    </location>
</feature>
<feature type="active site" description="Proton donor; for beta-elimination activity" evidence="2">
    <location>
        <position position="58"/>
    </location>
</feature>
<feature type="active site" description="Proton donor; for delta-elimination activity" evidence="2">
    <location>
        <position position="284"/>
    </location>
</feature>
<feature type="binding site" evidence="2">
    <location>
        <position position="106"/>
    </location>
    <ligand>
        <name>DNA</name>
        <dbReference type="ChEBI" id="CHEBI:16991"/>
    </ligand>
</feature>
<feature type="binding site" evidence="2">
    <location>
        <position position="125"/>
    </location>
    <ligand>
        <name>DNA</name>
        <dbReference type="ChEBI" id="CHEBI:16991"/>
    </ligand>
</feature>
<feature type="binding site" evidence="2">
    <location>
        <position position="167"/>
    </location>
    <ligand>
        <name>DNA</name>
        <dbReference type="ChEBI" id="CHEBI:16991"/>
    </ligand>
</feature>
<reference key="1">
    <citation type="submission" date="2008-03" db="EMBL/GenBank/DDBJ databases">
        <title>Complete sequence of chromosome of Methylobacterium radiotolerans JCM 2831.</title>
        <authorList>
            <consortium name="US DOE Joint Genome Institute"/>
            <person name="Copeland A."/>
            <person name="Lucas S."/>
            <person name="Lapidus A."/>
            <person name="Glavina del Rio T."/>
            <person name="Dalin E."/>
            <person name="Tice H."/>
            <person name="Bruce D."/>
            <person name="Goodwin L."/>
            <person name="Pitluck S."/>
            <person name="Kiss H."/>
            <person name="Brettin T."/>
            <person name="Detter J.C."/>
            <person name="Han C."/>
            <person name="Kuske C.R."/>
            <person name="Schmutz J."/>
            <person name="Larimer F."/>
            <person name="Land M."/>
            <person name="Hauser L."/>
            <person name="Kyrpides N."/>
            <person name="Mikhailova N."/>
            <person name="Marx C.J."/>
            <person name="Richardson P."/>
        </authorList>
    </citation>
    <scope>NUCLEOTIDE SEQUENCE [LARGE SCALE GENOMIC DNA]</scope>
    <source>
        <strain>ATCC 27329 / DSM 1819 / JCM 2831 / NBRC 15690 / NCIMB 10815 / 0-1</strain>
    </source>
</reference>
<comment type="function">
    <text evidence="2">Involved in base excision repair of DNA damaged by oxidation or by mutagenic agents. Acts as a DNA glycosylase that recognizes and removes damaged bases. Has a preference for oxidized purines, such as 7,8-dihydro-8-oxoguanine (8-oxoG). Has AP (apurinic/apyrimidinic) lyase activity and introduces nicks in the DNA strand. Cleaves the DNA backbone by beta-delta elimination to generate a single-strand break at the site of the removed base with both 3'- and 5'-phosphates.</text>
</comment>
<comment type="catalytic activity">
    <reaction evidence="2">
        <text>Hydrolysis of DNA containing ring-opened 7-methylguanine residues, releasing 2,6-diamino-4-hydroxy-5-(N-methyl)formamidopyrimidine.</text>
        <dbReference type="EC" id="3.2.2.23"/>
    </reaction>
</comment>
<comment type="catalytic activity">
    <reaction evidence="2">
        <text>2'-deoxyribonucleotide-(2'-deoxyribose 5'-phosphate)-2'-deoxyribonucleotide-DNA = a 3'-end 2'-deoxyribonucleotide-(2,3-dehydro-2,3-deoxyribose 5'-phosphate)-DNA + a 5'-end 5'-phospho-2'-deoxyribonucleoside-DNA + H(+)</text>
        <dbReference type="Rhea" id="RHEA:66592"/>
        <dbReference type="Rhea" id="RHEA-COMP:13180"/>
        <dbReference type="Rhea" id="RHEA-COMP:16897"/>
        <dbReference type="Rhea" id="RHEA-COMP:17067"/>
        <dbReference type="ChEBI" id="CHEBI:15378"/>
        <dbReference type="ChEBI" id="CHEBI:136412"/>
        <dbReference type="ChEBI" id="CHEBI:157695"/>
        <dbReference type="ChEBI" id="CHEBI:167181"/>
        <dbReference type="EC" id="4.2.99.18"/>
    </reaction>
</comment>
<comment type="cofactor">
    <cofactor evidence="2">
        <name>Zn(2+)</name>
        <dbReference type="ChEBI" id="CHEBI:29105"/>
    </cofactor>
    <text evidence="2">Binds 1 zinc ion per subunit.</text>
</comment>
<comment type="subunit">
    <text evidence="2">Monomer.</text>
</comment>
<comment type="similarity">
    <text evidence="2">Belongs to the FPG family.</text>
</comment>